<sequence length="309" mass="34587">MTQQPLRGVTSLHFNQDQSCFCCAMETGVRIYNVEPLMEKGHLDHEQVGSVGLVEMLHRSNLLALVGGGSSPKFSEISVLIWDDAREGKDSKDKLVLEFTFTKPVLAVRMRHDKIVIVLRNRIYVYSFPDNPRKLFEFDTRDNPKGLCDLCPSLEKQLLVFPGHKCGSLQLVSKEKLVELRRGTDPATLYCINFSHDSSFLCASSDKGTVHIFALKDTRLNRRSALARVGKVGPMIGQYVDSQWSLASFTVPAESACICAFGRNTSKNVNSVIAICVDGTFHKYVFTPDGNCNREAFDVYLDICDDDDF</sequence>
<gene>
    <name type="primary">Wdr45</name>
    <name type="synonym">Wipi4</name>
</gene>
<protein>
    <recommendedName>
        <fullName>WD repeat domain phosphoinositide-interacting protein 4</fullName>
        <shortName>WIPI-4</shortName>
    </recommendedName>
    <alternativeName>
        <fullName>WD repeat-containing protein 45</fullName>
    </alternativeName>
</protein>
<proteinExistence type="evidence at transcript level"/>
<organism>
    <name type="scientific">Rattus norvegicus</name>
    <name type="common">Rat</name>
    <dbReference type="NCBI Taxonomy" id="10116"/>
    <lineage>
        <taxon>Eukaryota</taxon>
        <taxon>Metazoa</taxon>
        <taxon>Chordata</taxon>
        <taxon>Craniata</taxon>
        <taxon>Vertebrata</taxon>
        <taxon>Euteleostomi</taxon>
        <taxon>Mammalia</taxon>
        <taxon>Eutheria</taxon>
        <taxon>Euarchontoglires</taxon>
        <taxon>Glires</taxon>
        <taxon>Rodentia</taxon>
        <taxon>Myomorpha</taxon>
        <taxon>Muroidea</taxon>
        <taxon>Muridae</taxon>
        <taxon>Murinae</taxon>
        <taxon>Rattus</taxon>
    </lineage>
</organism>
<evidence type="ECO:0000250" key="1">
    <source>
        <dbReference type="UniProtKB" id="Q9Y484"/>
    </source>
</evidence>
<evidence type="ECO:0000250" key="2">
    <source>
        <dbReference type="UniProtKB" id="Q9Y4P8"/>
    </source>
</evidence>
<evidence type="ECO:0000269" key="3">
    <source>
    </source>
</evidence>
<evidence type="ECO:0000305" key="4"/>
<accession>Q5U2Y0</accession>
<comment type="function">
    <text evidence="1 3">Component of the autophagy machinery that controls the major intracellular degradation process by which cytoplasmic materials are packaged into autophagosomes and delivered to lysosomes for degradation (PubMed:21802374). Binds phosphatidylinositol 3-phosphate (PtdIns3P). Activated by the STK11/AMPK signaling pathway upon starvation, WDR45 is involved in autophagosome assembly downstream of WIPI2, regulating the size of forming autophagosomes. Together with WIPI1, promotes ATG2 (ATG2A or ATG2B)-mediated lipid transfer by enhancing ATG2-association with phosphatidylinositol 3-monophosphate (PI3P)-containing membranes. Probably recruited to membranes through its PtdIns3P activity (By similarity).</text>
</comment>
<comment type="subunit">
    <text evidence="1">Interacts with WIPI1. Interacts with WIPI2. Interacts with ATG2A and ATG2B. Interacts with ULK1. May interact with the PRKAA1, PRKAA2, PRKAB1 and PRKAG1 subunits of the AMPK kinase. May interact with NUDC.</text>
</comment>
<comment type="subcellular location">
    <subcellularLocation>
        <location evidence="1">Preautophagosomal structure</location>
    </subcellularLocation>
    <subcellularLocation>
        <location evidence="1">Cytoplasm</location>
    </subcellularLocation>
    <text evidence="1">Diffusely localized in the cytoplasm under nutrient-rich conditions. Localizes to autophagic structures during starvation-induced autophagy.</text>
</comment>
<comment type="domain">
    <text evidence="2">The L/FRRG motif is required for recruitment to PtdIns3P.</text>
</comment>
<comment type="similarity">
    <text evidence="4">Belongs to the WD repeat PROPPIN family.</text>
</comment>
<reference key="1">
    <citation type="journal article" date="2004" name="Genome Res.">
        <title>The status, quality, and expansion of the NIH full-length cDNA project: the Mammalian Gene Collection (MGC).</title>
        <authorList>
            <consortium name="The MGC Project Team"/>
        </authorList>
    </citation>
    <scope>NUCLEOTIDE SEQUENCE [LARGE SCALE MRNA]</scope>
    <source>
        <tissue>Lung</tissue>
    </source>
</reference>
<reference key="2">
    <citation type="journal article" date="2011" name="Dev. Cell">
        <title>The WD40 repeat PtdIns(3)P-binding protein EPG-6 regulates progression of omegasomes to autophagosomes.</title>
        <authorList>
            <person name="Lu Q."/>
            <person name="Yang P."/>
            <person name="Huang X."/>
            <person name="Hu W."/>
            <person name="Guo B."/>
            <person name="Wu F."/>
            <person name="Lin L."/>
            <person name="Kovacs A.L."/>
            <person name="Yu L."/>
            <person name="Zhang H."/>
        </authorList>
    </citation>
    <scope>FUNCTION</scope>
</reference>
<feature type="chain" id="PRO_0000051454" description="WD repeat domain phosphoinositide-interacting protein 4">
    <location>
        <begin position="1"/>
        <end position="309"/>
    </location>
</feature>
<feature type="repeat" description="WD 1">
    <location>
        <begin position="4"/>
        <end position="42"/>
    </location>
</feature>
<feature type="repeat" description="WD 2">
    <location>
        <begin position="184"/>
        <end position="223"/>
    </location>
</feature>
<feature type="short sequence motif" description="L/FRRG motif" evidence="2">
    <location>
        <begin position="180"/>
        <end position="183"/>
    </location>
</feature>
<name>WIPI4_RAT</name>
<dbReference type="EMBL" id="BC085816">
    <property type="protein sequence ID" value="AAH85816.1"/>
    <property type="molecule type" value="mRNA"/>
</dbReference>
<dbReference type="RefSeq" id="NP_001013980.1">
    <property type="nucleotide sequence ID" value="NM_001013958.2"/>
</dbReference>
<dbReference type="SMR" id="Q5U2Y0"/>
<dbReference type="FunCoup" id="Q5U2Y0">
    <property type="interactions" value="572"/>
</dbReference>
<dbReference type="STRING" id="10116.ENSRNOP00000013369"/>
<dbReference type="PhosphoSitePlus" id="Q5U2Y0"/>
<dbReference type="PaxDb" id="10116-ENSRNOP00000013369"/>
<dbReference type="Ensembl" id="ENSRNOT00000099569.1">
    <property type="protein sequence ID" value="ENSRNOP00000089374.1"/>
    <property type="gene ID" value="ENSRNOG00000009749.8"/>
</dbReference>
<dbReference type="GeneID" id="302559"/>
<dbReference type="KEGG" id="rno:302559"/>
<dbReference type="UCSC" id="RGD:1359718">
    <property type="organism name" value="rat"/>
</dbReference>
<dbReference type="AGR" id="RGD:1359718"/>
<dbReference type="CTD" id="11152"/>
<dbReference type="RGD" id="1359718">
    <property type="gene designation" value="Wdr45"/>
</dbReference>
<dbReference type="eggNOG" id="KOG2111">
    <property type="taxonomic scope" value="Eukaryota"/>
</dbReference>
<dbReference type="GeneTree" id="ENSGT00940000155657"/>
<dbReference type="HOGENOM" id="CLU_025895_2_2_1"/>
<dbReference type="InParanoid" id="Q5U2Y0"/>
<dbReference type="OrthoDB" id="1667587at2759"/>
<dbReference type="Reactome" id="R-RNO-1632852">
    <property type="pathway name" value="Macroautophagy"/>
</dbReference>
<dbReference type="PRO" id="PR:Q5U2Y0"/>
<dbReference type="Proteomes" id="UP000002494">
    <property type="component" value="Chromosome X"/>
</dbReference>
<dbReference type="GO" id="GO:0005829">
    <property type="term" value="C:cytosol"/>
    <property type="evidence" value="ECO:0000318"/>
    <property type="project" value="GO_Central"/>
</dbReference>
<dbReference type="GO" id="GO:0000407">
    <property type="term" value="C:phagophore assembly site"/>
    <property type="evidence" value="ECO:0000250"/>
    <property type="project" value="UniProtKB"/>
</dbReference>
<dbReference type="GO" id="GO:0034045">
    <property type="term" value="C:phagophore assembly site membrane"/>
    <property type="evidence" value="ECO:0000318"/>
    <property type="project" value="GO_Central"/>
</dbReference>
<dbReference type="GO" id="GO:1901981">
    <property type="term" value="F:phosphatidylinositol phosphate binding"/>
    <property type="evidence" value="ECO:0000250"/>
    <property type="project" value="UniProtKB"/>
</dbReference>
<dbReference type="GO" id="GO:0080025">
    <property type="term" value="F:phosphatidylinositol-3,5-bisphosphate binding"/>
    <property type="evidence" value="ECO:0000318"/>
    <property type="project" value="GO_Central"/>
</dbReference>
<dbReference type="GO" id="GO:0032266">
    <property type="term" value="F:phosphatidylinositol-3-phosphate binding"/>
    <property type="evidence" value="ECO:0000250"/>
    <property type="project" value="UniProtKB"/>
</dbReference>
<dbReference type="GO" id="GO:0019901">
    <property type="term" value="F:protein kinase binding"/>
    <property type="evidence" value="ECO:0000266"/>
    <property type="project" value="RGD"/>
</dbReference>
<dbReference type="GO" id="GO:0030674">
    <property type="term" value="F:protein-macromolecule adaptor activity"/>
    <property type="evidence" value="ECO:0000318"/>
    <property type="project" value="GO_Central"/>
</dbReference>
<dbReference type="GO" id="GO:0000045">
    <property type="term" value="P:autophagosome assembly"/>
    <property type="evidence" value="ECO:0000250"/>
    <property type="project" value="UniProtKB"/>
</dbReference>
<dbReference type="GO" id="GO:0006914">
    <property type="term" value="P:autophagy"/>
    <property type="evidence" value="ECO:0000250"/>
    <property type="project" value="UniProtKB"/>
</dbReference>
<dbReference type="GO" id="GO:0000422">
    <property type="term" value="P:autophagy of mitochondrion"/>
    <property type="evidence" value="ECO:0000318"/>
    <property type="project" value="GO_Central"/>
</dbReference>
<dbReference type="GO" id="GO:0009267">
    <property type="term" value="P:cellular response to starvation"/>
    <property type="evidence" value="ECO:0000250"/>
    <property type="project" value="UniProtKB"/>
</dbReference>
<dbReference type="GO" id="GO:0061723">
    <property type="term" value="P:glycophagy"/>
    <property type="evidence" value="ECO:0000318"/>
    <property type="project" value="GO_Central"/>
</dbReference>
<dbReference type="GO" id="GO:0044804">
    <property type="term" value="P:nucleophagy"/>
    <property type="evidence" value="ECO:0000318"/>
    <property type="project" value="GO_Central"/>
</dbReference>
<dbReference type="GO" id="GO:0000425">
    <property type="term" value="P:pexophagy"/>
    <property type="evidence" value="ECO:0000318"/>
    <property type="project" value="GO_Central"/>
</dbReference>
<dbReference type="GO" id="GO:2000786">
    <property type="term" value="P:positive regulation of autophagosome assembly"/>
    <property type="evidence" value="ECO:0000250"/>
    <property type="project" value="UniProtKB"/>
</dbReference>
<dbReference type="GO" id="GO:0034497">
    <property type="term" value="P:protein localization to phagophore assembly site"/>
    <property type="evidence" value="ECO:0000318"/>
    <property type="project" value="GO_Central"/>
</dbReference>
<dbReference type="FunFam" id="2.130.10.10:FF:002731">
    <property type="entry name" value="WD repeat domain phosphoinositide-interacting protein 4"/>
    <property type="match status" value="1"/>
</dbReference>
<dbReference type="Gene3D" id="2.130.10.10">
    <property type="entry name" value="YVTN repeat-like/Quinoprotein amine dehydrogenase"/>
    <property type="match status" value="1"/>
</dbReference>
<dbReference type="InterPro" id="IPR048720">
    <property type="entry name" value="PROPPIN"/>
</dbReference>
<dbReference type="InterPro" id="IPR015943">
    <property type="entry name" value="WD40/YVTN_repeat-like_dom_sf"/>
</dbReference>
<dbReference type="InterPro" id="IPR036322">
    <property type="entry name" value="WD40_repeat_dom_sf"/>
</dbReference>
<dbReference type="InterPro" id="IPR001680">
    <property type="entry name" value="WD40_rpt"/>
</dbReference>
<dbReference type="PANTHER" id="PTHR11227">
    <property type="entry name" value="WD-REPEAT PROTEIN INTERACTING WITH PHOSPHOINOSIDES WIPI -RELATED"/>
    <property type="match status" value="1"/>
</dbReference>
<dbReference type="Pfam" id="PF00400">
    <property type="entry name" value="WD40"/>
    <property type="match status" value="1"/>
</dbReference>
<dbReference type="SUPFAM" id="SSF50978">
    <property type="entry name" value="WD40 repeat-like"/>
    <property type="match status" value="1"/>
</dbReference>
<keyword id="KW-0072">Autophagy</keyword>
<keyword id="KW-0963">Cytoplasm</keyword>
<keyword id="KW-0446">Lipid-binding</keyword>
<keyword id="KW-1185">Reference proteome</keyword>
<keyword id="KW-0677">Repeat</keyword>
<keyword id="KW-0853">WD repeat</keyword>